<reference key="1">
    <citation type="submission" date="2007-05" db="EMBL/GenBank/DDBJ databases">
        <title>Complete sequence of Geobacter uraniireducens Rf4.</title>
        <authorList>
            <consortium name="US DOE Joint Genome Institute"/>
            <person name="Copeland A."/>
            <person name="Lucas S."/>
            <person name="Lapidus A."/>
            <person name="Barry K."/>
            <person name="Detter J.C."/>
            <person name="Glavina del Rio T."/>
            <person name="Hammon N."/>
            <person name="Israni S."/>
            <person name="Dalin E."/>
            <person name="Tice H."/>
            <person name="Pitluck S."/>
            <person name="Chertkov O."/>
            <person name="Brettin T."/>
            <person name="Bruce D."/>
            <person name="Han C."/>
            <person name="Schmutz J."/>
            <person name="Larimer F."/>
            <person name="Land M."/>
            <person name="Hauser L."/>
            <person name="Kyrpides N."/>
            <person name="Mikhailova N."/>
            <person name="Shelobolina E."/>
            <person name="Aklujkar M."/>
            <person name="Lovley D."/>
            <person name="Richardson P."/>
        </authorList>
    </citation>
    <scope>NUCLEOTIDE SEQUENCE [LARGE SCALE GENOMIC DNA]</scope>
    <source>
        <strain>ATCC BAA-1134 / JCM 13001 / Rf4</strain>
    </source>
</reference>
<accession>A5GAY3</accession>
<dbReference type="EMBL" id="CP000698">
    <property type="protein sequence ID" value="ABQ25269.1"/>
    <property type="molecule type" value="Genomic_DNA"/>
</dbReference>
<dbReference type="RefSeq" id="WP_011937993.1">
    <property type="nucleotide sequence ID" value="NC_009483.1"/>
</dbReference>
<dbReference type="SMR" id="A5GAY3"/>
<dbReference type="STRING" id="351605.Gura_1063"/>
<dbReference type="KEGG" id="gur:Gura_1063"/>
<dbReference type="HOGENOM" id="CLU_104295_1_2_7"/>
<dbReference type="OrthoDB" id="9802366at2"/>
<dbReference type="Proteomes" id="UP000006695">
    <property type="component" value="Chromosome"/>
</dbReference>
<dbReference type="GO" id="GO:0015935">
    <property type="term" value="C:small ribosomal subunit"/>
    <property type="evidence" value="ECO:0007669"/>
    <property type="project" value="InterPro"/>
</dbReference>
<dbReference type="GO" id="GO:0019843">
    <property type="term" value="F:rRNA binding"/>
    <property type="evidence" value="ECO:0007669"/>
    <property type="project" value="UniProtKB-UniRule"/>
</dbReference>
<dbReference type="GO" id="GO:0003735">
    <property type="term" value="F:structural constituent of ribosome"/>
    <property type="evidence" value="ECO:0007669"/>
    <property type="project" value="InterPro"/>
</dbReference>
<dbReference type="GO" id="GO:0000049">
    <property type="term" value="F:tRNA binding"/>
    <property type="evidence" value="ECO:0007669"/>
    <property type="project" value="UniProtKB-UniRule"/>
</dbReference>
<dbReference type="GO" id="GO:0006412">
    <property type="term" value="P:translation"/>
    <property type="evidence" value="ECO:0007669"/>
    <property type="project" value="UniProtKB-UniRule"/>
</dbReference>
<dbReference type="CDD" id="cd03368">
    <property type="entry name" value="Ribosomal_S12"/>
    <property type="match status" value="1"/>
</dbReference>
<dbReference type="FunFam" id="2.40.50.140:FF:000001">
    <property type="entry name" value="30S ribosomal protein S12"/>
    <property type="match status" value="1"/>
</dbReference>
<dbReference type="Gene3D" id="2.40.50.140">
    <property type="entry name" value="Nucleic acid-binding proteins"/>
    <property type="match status" value="1"/>
</dbReference>
<dbReference type="HAMAP" id="MF_00403_B">
    <property type="entry name" value="Ribosomal_uS12_B"/>
    <property type="match status" value="1"/>
</dbReference>
<dbReference type="InterPro" id="IPR012340">
    <property type="entry name" value="NA-bd_OB-fold"/>
</dbReference>
<dbReference type="InterPro" id="IPR006032">
    <property type="entry name" value="Ribosomal_uS12"/>
</dbReference>
<dbReference type="InterPro" id="IPR005679">
    <property type="entry name" value="Ribosomal_uS12_bac"/>
</dbReference>
<dbReference type="NCBIfam" id="TIGR00981">
    <property type="entry name" value="rpsL_bact"/>
    <property type="match status" value="1"/>
</dbReference>
<dbReference type="PANTHER" id="PTHR11652">
    <property type="entry name" value="30S RIBOSOMAL PROTEIN S12 FAMILY MEMBER"/>
    <property type="match status" value="1"/>
</dbReference>
<dbReference type="Pfam" id="PF00164">
    <property type="entry name" value="Ribosom_S12_S23"/>
    <property type="match status" value="1"/>
</dbReference>
<dbReference type="PIRSF" id="PIRSF002133">
    <property type="entry name" value="Ribosomal_S12/S23"/>
    <property type="match status" value="1"/>
</dbReference>
<dbReference type="PRINTS" id="PR01034">
    <property type="entry name" value="RIBOSOMALS12"/>
</dbReference>
<dbReference type="SUPFAM" id="SSF50249">
    <property type="entry name" value="Nucleic acid-binding proteins"/>
    <property type="match status" value="1"/>
</dbReference>
<dbReference type="PROSITE" id="PS00055">
    <property type="entry name" value="RIBOSOMAL_S12"/>
    <property type="match status" value="1"/>
</dbReference>
<name>RS12_GEOUR</name>
<gene>
    <name evidence="2" type="primary">rpsL</name>
    <name type="ordered locus">Gura_1063</name>
</gene>
<feature type="chain" id="PRO_1000080397" description="Small ribosomal subunit protein uS12">
    <location>
        <begin position="1"/>
        <end position="123"/>
    </location>
</feature>
<feature type="modified residue" description="3-methylthioaspartic acid" evidence="1">
    <location>
        <position position="89"/>
    </location>
</feature>
<evidence type="ECO:0000250" key="1"/>
<evidence type="ECO:0000255" key="2">
    <source>
        <dbReference type="HAMAP-Rule" id="MF_00403"/>
    </source>
</evidence>
<evidence type="ECO:0000305" key="3"/>
<proteinExistence type="inferred from homology"/>
<protein>
    <recommendedName>
        <fullName evidence="2">Small ribosomal subunit protein uS12</fullName>
    </recommendedName>
    <alternativeName>
        <fullName evidence="3">30S ribosomal protein S12</fullName>
    </alternativeName>
</protein>
<sequence length="123" mass="13659">MPTINQLIRIGRESKKDKSTAPALKCCPQKRGVCTRVYTTTPKKPNSALRKVARVRLTNGVEVTSYIPGVGHNLQEHSVVLIRGGRVKDLPGVRYHIVRGTLDSVGVKDRKKSRSKYGAKRPK</sequence>
<keyword id="KW-0488">Methylation</keyword>
<keyword id="KW-1185">Reference proteome</keyword>
<keyword id="KW-0687">Ribonucleoprotein</keyword>
<keyword id="KW-0689">Ribosomal protein</keyword>
<keyword id="KW-0694">RNA-binding</keyword>
<keyword id="KW-0699">rRNA-binding</keyword>
<keyword id="KW-0820">tRNA-binding</keyword>
<organism>
    <name type="scientific">Geotalea uraniireducens (strain Rf4)</name>
    <name type="common">Geobacter uraniireducens</name>
    <dbReference type="NCBI Taxonomy" id="351605"/>
    <lineage>
        <taxon>Bacteria</taxon>
        <taxon>Pseudomonadati</taxon>
        <taxon>Thermodesulfobacteriota</taxon>
        <taxon>Desulfuromonadia</taxon>
        <taxon>Geobacterales</taxon>
        <taxon>Geobacteraceae</taxon>
        <taxon>Geotalea</taxon>
    </lineage>
</organism>
<comment type="function">
    <text evidence="2">With S4 and S5 plays an important role in translational accuracy.</text>
</comment>
<comment type="function">
    <text evidence="2">Interacts with and stabilizes bases of the 16S rRNA that are involved in tRNA selection in the A site and with the mRNA backbone. Located at the interface of the 30S and 50S subunits, it traverses the body of the 30S subunit contacting proteins on the other side and probably holding the rRNA structure together. The combined cluster of proteins S8, S12 and S17 appears to hold together the shoulder and platform of the 30S subunit.</text>
</comment>
<comment type="subunit">
    <text evidence="2">Part of the 30S ribosomal subunit. Contacts proteins S8 and S17. May interact with IF1 in the 30S initiation complex.</text>
</comment>
<comment type="similarity">
    <text evidence="2">Belongs to the universal ribosomal protein uS12 family.</text>
</comment>